<keyword id="KW-0963">Cytoplasm</keyword>
<keyword id="KW-0521">NADP</keyword>
<keyword id="KW-0560">Oxidoreductase</keyword>
<keyword id="KW-0671">Queuosine biosynthesis</keyword>
<proteinExistence type="inferred from homology"/>
<dbReference type="EC" id="1.7.1.13" evidence="1"/>
<dbReference type="EMBL" id="CP000463">
    <property type="protein sequence ID" value="ABJ06544.1"/>
    <property type="molecule type" value="Genomic_DNA"/>
</dbReference>
<dbReference type="SMR" id="Q07NE0"/>
<dbReference type="STRING" id="316055.RPE_2606"/>
<dbReference type="KEGG" id="rpe:RPE_2606"/>
<dbReference type="eggNOG" id="COG0780">
    <property type="taxonomic scope" value="Bacteria"/>
</dbReference>
<dbReference type="HOGENOM" id="CLU_102489_0_1_5"/>
<dbReference type="OrthoDB" id="9789995at2"/>
<dbReference type="UniPathway" id="UPA00392"/>
<dbReference type="GO" id="GO:0005737">
    <property type="term" value="C:cytoplasm"/>
    <property type="evidence" value="ECO:0007669"/>
    <property type="project" value="UniProtKB-SubCell"/>
</dbReference>
<dbReference type="GO" id="GO:0033739">
    <property type="term" value="F:preQ1 synthase activity"/>
    <property type="evidence" value="ECO:0007669"/>
    <property type="project" value="UniProtKB-UniRule"/>
</dbReference>
<dbReference type="GO" id="GO:0008616">
    <property type="term" value="P:queuosine biosynthetic process"/>
    <property type="evidence" value="ECO:0007669"/>
    <property type="project" value="UniProtKB-UniRule"/>
</dbReference>
<dbReference type="GO" id="GO:0006400">
    <property type="term" value="P:tRNA modification"/>
    <property type="evidence" value="ECO:0007669"/>
    <property type="project" value="UniProtKB-UniRule"/>
</dbReference>
<dbReference type="Gene3D" id="3.30.1130.10">
    <property type="match status" value="1"/>
</dbReference>
<dbReference type="HAMAP" id="MF_00818">
    <property type="entry name" value="QueF_type1"/>
    <property type="match status" value="1"/>
</dbReference>
<dbReference type="InterPro" id="IPR043133">
    <property type="entry name" value="GTP-CH-I_C/QueF"/>
</dbReference>
<dbReference type="InterPro" id="IPR050084">
    <property type="entry name" value="NADPH_dep_7-cyano-7-deazaG_red"/>
</dbReference>
<dbReference type="InterPro" id="IPR029500">
    <property type="entry name" value="QueF"/>
</dbReference>
<dbReference type="InterPro" id="IPR016856">
    <property type="entry name" value="QueF_type1"/>
</dbReference>
<dbReference type="NCBIfam" id="TIGR03139">
    <property type="entry name" value="QueF-II"/>
    <property type="match status" value="1"/>
</dbReference>
<dbReference type="PANTHER" id="PTHR34354">
    <property type="entry name" value="NADPH-DEPENDENT 7-CYANO-7-DEAZAGUANINE REDUCTASE"/>
    <property type="match status" value="1"/>
</dbReference>
<dbReference type="PANTHER" id="PTHR34354:SF1">
    <property type="entry name" value="NADPH-DEPENDENT 7-CYANO-7-DEAZAGUANINE REDUCTASE"/>
    <property type="match status" value="1"/>
</dbReference>
<dbReference type="Pfam" id="PF14489">
    <property type="entry name" value="QueF"/>
    <property type="match status" value="1"/>
</dbReference>
<dbReference type="SUPFAM" id="SSF55620">
    <property type="entry name" value="Tetrahydrobiopterin biosynthesis enzymes-like"/>
    <property type="match status" value="1"/>
</dbReference>
<accession>Q07NE0</accession>
<gene>
    <name evidence="1" type="primary">queF</name>
    <name type="ordered locus">RPE_2606</name>
</gene>
<name>QUEF_RHOP5</name>
<evidence type="ECO:0000255" key="1">
    <source>
        <dbReference type="HAMAP-Rule" id="MF_00818"/>
    </source>
</evidence>
<evidence type="ECO:0000256" key="2">
    <source>
        <dbReference type="SAM" id="MobiDB-lite"/>
    </source>
</evidence>
<protein>
    <recommendedName>
        <fullName evidence="1">NADPH-dependent 7-cyano-7-deazaguanine reductase</fullName>
        <ecNumber evidence="1">1.7.1.13</ecNumber>
    </recommendedName>
    <alternativeName>
        <fullName evidence="1">7-cyano-7-carbaguanine reductase</fullName>
    </alternativeName>
    <alternativeName>
        <fullName evidence="1">NADPH-dependent nitrile oxidoreductase</fullName>
    </alternativeName>
    <alternativeName>
        <fullName evidence="1">PreQ(0) reductase</fullName>
    </alternativeName>
</protein>
<reference key="1">
    <citation type="submission" date="2006-09" db="EMBL/GenBank/DDBJ databases">
        <title>Complete sequence of Rhodopseudomonas palustris BisA53.</title>
        <authorList>
            <consortium name="US DOE Joint Genome Institute"/>
            <person name="Copeland A."/>
            <person name="Lucas S."/>
            <person name="Lapidus A."/>
            <person name="Barry K."/>
            <person name="Detter J.C."/>
            <person name="Glavina del Rio T."/>
            <person name="Hammon N."/>
            <person name="Israni S."/>
            <person name="Dalin E."/>
            <person name="Tice H."/>
            <person name="Pitluck S."/>
            <person name="Chain P."/>
            <person name="Malfatti S."/>
            <person name="Shin M."/>
            <person name="Vergez L."/>
            <person name="Schmutz J."/>
            <person name="Larimer F."/>
            <person name="Land M."/>
            <person name="Hauser L."/>
            <person name="Pelletier D.A."/>
            <person name="Kyrpides N."/>
            <person name="Kim E."/>
            <person name="Harwood C.S."/>
            <person name="Oda Y."/>
            <person name="Richardson P."/>
        </authorList>
    </citation>
    <scope>NUCLEOTIDE SEQUENCE [LARGE SCALE GENOMIC DNA]</scope>
    <source>
        <strain>BisA53</strain>
    </source>
</reference>
<comment type="function">
    <text evidence="1">Catalyzes the NADPH-dependent reduction of 7-cyano-7-deazaguanine (preQ0) to 7-aminomethyl-7-deazaguanine (preQ1).</text>
</comment>
<comment type="catalytic activity">
    <reaction evidence="1">
        <text>7-aminomethyl-7-carbaguanine + 2 NADP(+) = 7-cyano-7-deazaguanine + 2 NADPH + 3 H(+)</text>
        <dbReference type="Rhea" id="RHEA:13409"/>
        <dbReference type="ChEBI" id="CHEBI:15378"/>
        <dbReference type="ChEBI" id="CHEBI:45075"/>
        <dbReference type="ChEBI" id="CHEBI:57783"/>
        <dbReference type="ChEBI" id="CHEBI:58349"/>
        <dbReference type="ChEBI" id="CHEBI:58703"/>
        <dbReference type="EC" id="1.7.1.13"/>
    </reaction>
</comment>
<comment type="pathway">
    <text evidence="1">tRNA modification; tRNA-queuosine biosynthesis.</text>
</comment>
<comment type="subcellular location">
    <subcellularLocation>
        <location evidence="1">Cytoplasm</location>
    </subcellularLocation>
</comment>
<comment type="similarity">
    <text evidence="1">Belongs to the GTP cyclohydrolase I family. QueF type 1 subfamily.</text>
</comment>
<organism>
    <name type="scientific">Rhodopseudomonas palustris (strain BisA53)</name>
    <dbReference type="NCBI Taxonomy" id="316055"/>
    <lineage>
        <taxon>Bacteria</taxon>
        <taxon>Pseudomonadati</taxon>
        <taxon>Pseudomonadota</taxon>
        <taxon>Alphaproteobacteria</taxon>
        <taxon>Hyphomicrobiales</taxon>
        <taxon>Nitrobacteraceae</taxon>
        <taxon>Rhodopseudomonas</taxon>
    </lineage>
</organism>
<sequence length="163" mass="18275">MSKPPRRSPRKPTPASPELQLGHEVVWPTSPDAARLDRVANPQRDTDYLARFTAPEFTSLCPVTGQPDFAHLVIDYAPGAWLLESKSLKLYLASFRSHGAFHEDCTVGIGKRIAAEIKPKWLRIGGYWYPRGGIPIDVFWQTGKLPKGLWVPDQGVRPYRGRG</sequence>
<feature type="chain" id="PRO_1000062406" description="NADPH-dependent 7-cyano-7-deazaguanine reductase">
    <location>
        <begin position="1"/>
        <end position="163"/>
    </location>
</feature>
<feature type="region of interest" description="Disordered" evidence="2">
    <location>
        <begin position="1"/>
        <end position="23"/>
    </location>
</feature>
<feature type="compositionally biased region" description="Basic residues" evidence="2">
    <location>
        <begin position="1"/>
        <end position="10"/>
    </location>
</feature>
<feature type="active site" description="Thioimide intermediate" evidence="1">
    <location>
        <position position="61"/>
    </location>
</feature>
<feature type="active site" description="Proton donor" evidence="1">
    <location>
        <position position="68"/>
    </location>
</feature>
<feature type="binding site" evidence="1">
    <location>
        <begin position="83"/>
        <end position="85"/>
    </location>
    <ligand>
        <name>substrate</name>
    </ligand>
</feature>
<feature type="binding site" evidence="1">
    <location>
        <begin position="102"/>
        <end position="103"/>
    </location>
    <ligand>
        <name>substrate</name>
    </ligand>
</feature>